<dbReference type="EMBL" id="X16311">
    <property type="protein sequence ID" value="CAA34377.1"/>
    <property type="molecule type" value="Genomic_DNA"/>
</dbReference>
<dbReference type="PIR" id="S05297">
    <property type="entry name" value="S05297"/>
</dbReference>
<dbReference type="SMR" id="P24426"/>
<dbReference type="GO" id="GO:0005524">
    <property type="term" value="F:ATP binding"/>
    <property type="evidence" value="ECO:0007669"/>
    <property type="project" value="UniProtKB-KW"/>
</dbReference>
<dbReference type="GO" id="GO:0016887">
    <property type="term" value="F:ATP hydrolysis activity"/>
    <property type="evidence" value="ECO:0007669"/>
    <property type="project" value="InterPro"/>
</dbReference>
<dbReference type="GO" id="GO:0003700">
    <property type="term" value="F:DNA-binding transcription factor activity"/>
    <property type="evidence" value="ECO:0007669"/>
    <property type="project" value="InterPro"/>
</dbReference>
<dbReference type="GO" id="GO:0043565">
    <property type="term" value="F:sequence-specific DNA binding"/>
    <property type="evidence" value="ECO:0007669"/>
    <property type="project" value="InterPro"/>
</dbReference>
<dbReference type="GO" id="GO:0009399">
    <property type="term" value="P:nitrogen fixation"/>
    <property type="evidence" value="ECO:0007669"/>
    <property type="project" value="UniProtKB-KW"/>
</dbReference>
<dbReference type="GO" id="GO:0000160">
    <property type="term" value="P:phosphorelay signal transduction system"/>
    <property type="evidence" value="ECO:0007669"/>
    <property type="project" value="UniProtKB-KW"/>
</dbReference>
<dbReference type="CDD" id="cd00009">
    <property type="entry name" value="AAA"/>
    <property type="match status" value="1"/>
</dbReference>
<dbReference type="FunFam" id="3.40.50.300:FF:000006">
    <property type="entry name" value="DNA-binding transcriptional regulator NtrC"/>
    <property type="match status" value="1"/>
</dbReference>
<dbReference type="Gene3D" id="1.10.8.60">
    <property type="match status" value="1"/>
</dbReference>
<dbReference type="Gene3D" id="1.10.10.60">
    <property type="entry name" value="Homeodomain-like"/>
    <property type="match status" value="1"/>
</dbReference>
<dbReference type="Gene3D" id="3.40.50.300">
    <property type="entry name" value="P-loop containing nucleotide triphosphate hydrolases"/>
    <property type="match status" value="1"/>
</dbReference>
<dbReference type="InterPro" id="IPR003593">
    <property type="entry name" value="AAA+_ATPase"/>
</dbReference>
<dbReference type="InterPro" id="IPR002197">
    <property type="entry name" value="HTH_Fis"/>
</dbReference>
<dbReference type="InterPro" id="IPR010113">
    <property type="entry name" value="Nif-specific_regulatory_prot"/>
</dbReference>
<dbReference type="InterPro" id="IPR027417">
    <property type="entry name" value="P-loop_NTPase"/>
</dbReference>
<dbReference type="InterPro" id="IPR002078">
    <property type="entry name" value="Sigma_54_int"/>
</dbReference>
<dbReference type="InterPro" id="IPR025662">
    <property type="entry name" value="Sigma_54_int_dom_ATP-bd_1"/>
</dbReference>
<dbReference type="InterPro" id="IPR025943">
    <property type="entry name" value="Sigma_54_int_dom_ATP-bd_2"/>
</dbReference>
<dbReference type="InterPro" id="IPR025944">
    <property type="entry name" value="Sigma_54_int_dom_CS"/>
</dbReference>
<dbReference type="NCBIfam" id="TIGR01817">
    <property type="entry name" value="nifA"/>
    <property type="match status" value="1"/>
</dbReference>
<dbReference type="PANTHER" id="PTHR32071:SF117">
    <property type="entry name" value="PTS-DEPENDENT DIHYDROXYACETONE KINASE OPERON REGULATORY PROTEIN-RELATED"/>
    <property type="match status" value="1"/>
</dbReference>
<dbReference type="PANTHER" id="PTHR32071">
    <property type="entry name" value="TRANSCRIPTIONAL REGULATORY PROTEIN"/>
    <property type="match status" value="1"/>
</dbReference>
<dbReference type="Pfam" id="PF02954">
    <property type="entry name" value="HTH_8"/>
    <property type="match status" value="1"/>
</dbReference>
<dbReference type="Pfam" id="PF00158">
    <property type="entry name" value="Sigma54_activat"/>
    <property type="match status" value="1"/>
</dbReference>
<dbReference type="PRINTS" id="PR01590">
    <property type="entry name" value="HTHFIS"/>
</dbReference>
<dbReference type="SMART" id="SM00382">
    <property type="entry name" value="AAA"/>
    <property type="match status" value="1"/>
</dbReference>
<dbReference type="SUPFAM" id="SSF52540">
    <property type="entry name" value="P-loop containing nucleoside triphosphate hydrolases"/>
    <property type="match status" value="1"/>
</dbReference>
<dbReference type="PROSITE" id="PS00675">
    <property type="entry name" value="SIGMA54_INTERACT_1"/>
    <property type="match status" value="1"/>
</dbReference>
<dbReference type="PROSITE" id="PS00676">
    <property type="entry name" value="SIGMA54_INTERACT_2"/>
    <property type="match status" value="1"/>
</dbReference>
<dbReference type="PROSITE" id="PS00688">
    <property type="entry name" value="SIGMA54_INTERACT_3"/>
    <property type="match status" value="1"/>
</dbReference>
<dbReference type="PROSITE" id="PS50045">
    <property type="entry name" value="SIGMA54_INTERACT_4"/>
    <property type="match status" value="1"/>
</dbReference>
<feature type="chain" id="PRO_0000081312" description="Nif-specific regulatory protein">
    <location>
        <begin position="1"/>
        <end position="353"/>
    </location>
</feature>
<feature type="domain" description="Sigma-54 factor interaction" evidence="2">
    <location>
        <begin position="12"/>
        <end position="240"/>
    </location>
</feature>
<feature type="DNA-binding region" description="H-T-H motif" evidence="1">
    <location>
        <begin position="325"/>
        <end position="344"/>
    </location>
</feature>
<feature type="binding site" evidence="2">
    <location>
        <begin position="40"/>
        <end position="47"/>
    </location>
    <ligand>
        <name>ATP</name>
        <dbReference type="ChEBI" id="CHEBI:30616"/>
    </ligand>
</feature>
<feature type="binding site" evidence="2">
    <location>
        <begin position="103"/>
        <end position="112"/>
    </location>
    <ligand>
        <name>ATP</name>
        <dbReference type="ChEBI" id="CHEBI:30616"/>
    </ligand>
</feature>
<gene>
    <name type="primary">nifA</name>
</gene>
<sequence>MPKSTVRPGAEIVGESAALKEVLEIAQIVARSNSPVLLRGESGTGKEFFAKLIHDSSSRHEKPFVKLNCAALSAGVLESELFGHEKGAFTGATSQKEGRFELAHGGTLLLDEIGEISAEFQAKLLRVLQEGELERVGGTRTLKVNVRLVCATNKDLETAVAAGEFRADLYYRINVVPITLPPLRQRDGDIPRLAQKFLQRFNRENGRSLSFAPATLDILSKCEFPGNIRELQNCTQRTATLARSDVIVPQDLACEQGRCYSPILKKAVAEQVGKGAIHGLARGETESMGQPCDVGVFAAETVMGQSGLIGRERLEQAMATAGWVQAKAARLLGRTPRQVGYSLRRHGIERKVF</sequence>
<geneLocation type="plasmid">
    <name>sym pRtr843e</name>
</geneLocation>
<keyword id="KW-0010">Activator</keyword>
<keyword id="KW-0067">ATP-binding</keyword>
<keyword id="KW-0238">DNA-binding</keyword>
<keyword id="KW-0535">Nitrogen fixation</keyword>
<keyword id="KW-0547">Nucleotide-binding</keyword>
<keyword id="KW-0614">Plasmid</keyword>
<keyword id="KW-0804">Transcription</keyword>
<keyword id="KW-0805">Transcription regulation</keyword>
<keyword id="KW-0902">Two-component regulatory system</keyword>
<protein>
    <recommendedName>
        <fullName>Nif-specific regulatory protein</fullName>
    </recommendedName>
</protein>
<reference key="1">
    <citation type="journal article" date="1989" name="Mol. Microbiol.">
        <title>The nifA gene product from Rhizobium leguminosarum biovar trifolii lacks the N-terminal domain found in other NifA proteins.</title>
        <authorList>
            <person name="Watson J.M."/>
            <person name="Iismaa S.E."/>
        </authorList>
    </citation>
    <scope>NUCLEOTIDE SEQUENCE [GENOMIC DNA]</scope>
    <source>
        <strain>ANU 843</strain>
    </source>
</reference>
<proteinExistence type="predicted"/>
<accession>P24426</accession>
<evidence type="ECO:0000250" key="1"/>
<evidence type="ECO:0000255" key="2">
    <source>
        <dbReference type="PROSITE-ProRule" id="PRU00193"/>
    </source>
</evidence>
<evidence type="ECO:0000305" key="3"/>
<organism>
    <name type="scientific">Rhizobium leguminosarum bv. trifolii</name>
    <dbReference type="NCBI Taxonomy" id="386"/>
    <lineage>
        <taxon>Bacteria</taxon>
        <taxon>Pseudomonadati</taxon>
        <taxon>Pseudomonadota</taxon>
        <taxon>Alphaproteobacteria</taxon>
        <taxon>Hyphomicrobiales</taxon>
        <taxon>Rhizobiaceae</taxon>
        <taxon>Rhizobium/Agrobacterium group</taxon>
        <taxon>Rhizobium</taxon>
    </lineage>
</organism>
<name>NIFA_RHILT</name>
<comment type="function">
    <text>Required for activation of most nif operons, which are directly involved in nitrogen fixation.</text>
</comment>
<comment type="subunit">
    <text>Interacts with sigma-54.</text>
</comment>
<comment type="caution">
    <text evidence="3">This protein lacks the N-terminal domain found in other NifA proteins.</text>
</comment>